<proteinExistence type="evidence at protein level"/>
<dbReference type="EC" id="1.7.-.-" evidence="1"/>
<dbReference type="EC" id="1.11.1.-" evidence="1"/>
<dbReference type="RefSeq" id="XP_009682642.1">
    <property type="nucleotide sequence ID" value="XM_009684347.2"/>
</dbReference>
<dbReference type="SMR" id="P85077"/>
<dbReference type="GeneID" id="104150216"/>
<dbReference type="GO" id="GO:0070062">
    <property type="term" value="C:extracellular exosome"/>
    <property type="evidence" value="ECO:0007669"/>
    <property type="project" value="TreeGrafter"/>
</dbReference>
<dbReference type="GO" id="GO:0016528">
    <property type="term" value="C:sarcoplasm"/>
    <property type="evidence" value="ECO:0000250"/>
    <property type="project" value="UniProtKB"/>
</dbReference>
<dbReference type="GO" id="GO:0020037">
    <property type="term" value="F:heme binding"/>
    <property type="evidence" value="ECO:0007669"/>
    <property type="project" value="InterPro"/>
</dbReference>
<dbReference type="GO" id="GO:0046872">
    <property type="term" value="F:metal ion binding"/>
    <property type="evidence" value="ECO:0007669"/>
    <property type="project" value="UniProtKB-KW"/>
</dbReference>
<dbReference type="GO" id="GO:0098809">
    <property type="term" value="F:nitrite reductase activity"/>
    <property type="evidence" value="ECO:0000250"/>
    <property type="project" value="UniProtKB"/>
</dbReference>
<dbReference type="GO" id="GO:0019825">
    <property type="term" value="F:oxygen binding"/>
    <property type="evidence" value="ECO:0007669"/>
    <property type="project" value="InterPro"/>
</dbReference>
<dbReference type="GO" id="GO:0005344">
    <property type="term" value="F:oxygen carrier activity"/>
    <property type="evidence" value="ECO:0000250"/>
    <property type="project" value="UniProtKB"/>
</dbReference>
<dbReference type="GO" id="GO:0004601">
    <property type="term" value="F:peroxidase activity"/>
    <property type="evidence" value="ECO:0000250"/>
    <property type="project" value="UniProtKB"/>
</dbReference>
<dbReference type="GO" id="GO:0019430">
    <property type="term" value="P:removal of superoxide radicals"/>
    <property type="evidence" value="ECO:0000250"/>
    <property type="project" value="UniProtKB"/>
</dbReference>
<dbReference type="Gene3D" id="6.10.140.2100">
    <property type="match status" value="1"/>
</dbReference>
<dbReference type="Gene3D" id="6.10.140.2110">
    <property type="match status" value="1"/>
</dbReference>
<dbReference type="InterPro" id="IPR000971">
    <property type="entry name" value="Globin"/>
</dbReference>
<dbReference type="InterPro" id="IPR009050">
    <property type="entry name" value="Globin-like_sf"/>
</dbReference>
<dbReference type="InterPro" id="IPR002335">
    <property type="entry name" value="Myoglobin"/>
</dbReference>
<dbReference type="PANTHER" id="PTHR47132">
    <property type="entry name" value="MYOGLOBIN"/>
    <property type="match status" value="1"/>
</dbReference>
<dbReference type="PANTHER" id="PTHR47132:SF1">
    <property type="entry name" value="MYOGLOBIN"/>
    <property type="match status" value="1"/>
</dbReference>
<dbReference type="Pfam" id="PF00042">
    <property type="entry name" value="Globin"/>
    <property type="match status" value="1"/>
</dbReference>
<dbReference type="PRINTS" id="PR00613">
    <property type="entry name" value="MYOGLOBIN"/>
</dbReference>
<dbReference type="SUPFAM" id="SSF46458">
    <property type="entry name" value="Globin-like"/>
    <property type="match status" value="1"/>
</dbReference>
<dbReference type="PROSITE" id="PS01033">
    <property type="entry name" value="GLOBIN"/>
    <property type="match status" value="1"/>
</dbReference>
<organism>
    <name type="scientific">Struthio camelus</name>
    <name type="common">Common ostrich</name>
    <dbReference type="NCBI Taxonomy" id="8801"/>
    <lineage>
        <taxon>Eukaryota</taxon>
        <taxon>Metazoa</taxon>
        <taxon>Chordata</taxon>
        <taxon>Craniata</taxon>
        <taxon>Vertebrata</taxon>
        <taxon>Euteleostomi</taxon>
        <taxon>Archelosauria</taxon>
        <taxon>Archosauria</taxon>
        <taxon>Dinosauria</taxon>
        <taxon>Saurischia</taxon>
        <taxon>Theropoda</taxon>
        <taxon>Coelurosauria</taxon>
        <taxon>Aves</taxon>
        <taxon>Palaeognathae</taxon>
        <taxon>Struthioniformes</taxon>
        <taxon>Struthionidae</taxon>
        <taxon>Struthio</taxon>
    </lineage>
</organism>
<keyword id="KW-0963">Cytoplasm</keyword>
<keyword id="KW-0903">Direct protein sequencing</keyword>
<keyword id="KW-0349">Heme</keyword>
<keyword id="KW-0408">Iron</keyword>
<keyword id="KW-0479">Metal-binding</keyword>
<keyword id="KW-0514">Muscle protein</keyword>
<keyword id="KW-0560">Oxidoreductase</keyword>
<keyword id="KW-0561">Oxygen transport</keyword>
<keyword id="KW-0813">Transport</keyword>
<protein>
    <recommendedName>
        <fullName>Myoglobin</fullName>
    </recommendedName>
    <alternativeName>
        <fullName evidence="1">Nitrite reductase MB</fullName>
        <ecNumber evidence="1">1.7.-.-</ecNumber>
    </alternativeName>
    <alternativeName>
        <fullName evidence="1">Pseudoperoxidase MB</fullName>
        <ecNumber evidence="1">1.11.1.-</ecNumber>
    </alternativeName>
</protein>
<gene>
    <name type="primary">MB</name>
</gene>
<accession>P85077</accession>
<reference evidence="7" key="1">
    <citation type="submission" date="2007-01" db="UniProtKB">
        <authorList>
            <person name="Dosi R."/>
            <person name="Di Maro A."/>
            <person name="Chambery A."/>
            <person name="Parente A."/>
        </authorList>
    </citation>
    <scope>PROTEIN SEQUENCE OF 2-154</scope>
    <scope>FUNCTION</scope>
    <scope>MASS SPECTROMETRY</scope>
    <source>
        <tissue>Muscle</tissue>
    </source>
</reference>
<name>MYG_STRCA</name>
<sequence>MGLSDQEWQQVLTIWGKVESDIAGHGHAILMRLFQDHPETLDRFEKFKGLTTPEQMKASEELKKHGVTVLTQLGKILKQKGKHEAELKPLAQTHATKHKIPVKYLEFISEVIIKVIAEKHSADFGADSQAAMKKALELFRNDMASKYKEFGFQG</sequence>
<comment type="function">
    <text evidence="1 6">Monomeric heme protein which primary function is to store oxygen and facilitate its diffusion within muscle tissues. Reversibly binds oxygen through a pentacoordinated heme iron and enables its timely and efficient release as needed during periods of heightened demand (Ref.1). Depending on the oxidative conditions of tissues and cells, and in addition to its ability to bind oxygen, it also has a nitrite reductase activity whereby it regulates the production of bioactive nitric oxide. Under stress conditions, like hypoxia and anoxia, it also protects cells against reactive oxygen species thanks to its pseudoperoxidase activity (By similarity).</text>
</comment>
<comment type="catalytic activity">
    <reaction evidence="1">
        <text>Fe(III)-heme b-[protein] + nitric oxide + H2O = Fe(II)-heme b-[protein] + nitrite + 2 H(+)</text>
        <dbReference type="Rhea" id="RHEA:77711"/>
        <dbReference type="Rhea" id="RHEA-COMP:18975"/>
        <dbReference type="Rhea" id="RHEA-COMP:18976"/>
        <dbReference type="ChEBI" id="CHEBI:15377"/>
        <dbReference type="ChEBI" id="CHEBI:15378"/>
        <dbReference type="ChEBI" id="CHEBI:16301"/>
        <dbReference type="ChEBI" id="CHEBI:16480"/>
        <dbReference type="ChEBI" id="CHEBI:55376"/>
        <dbReference type="ChEBI" id="CHEBI:60344"/>
    </reaction>
    <physiologicalReaction direction="right-to-left" evidence="1">
        <dbReference type="Rhea" id="RHEA:77713"/>
    </physiologicalReaction>
</comment>
<comment type="catalytic activity">
    <reaction evidence="1">
        <text>H2O2 + AH2 = A + 2 H2O</text>
        <dbReference type="Rhea" id="RHEA:30275"/>
        <dbReference type="ChEBI" id="CHEBI:13193"/>
        <dbReference type="ChEBI" id="CHEBI:15377"/>
        <dbReference type="ChEBI" id="CHEBI:16240"/>
        <dbReference type="ChEBI" id="CHEBI:17499"/>
    </reaction>
</comment>
<comment type="subunit">
    <text evidence="2">Monomeric.</text>
</comment>
<comment type="subcellular location">
    <subcellularLocation>
        <location evidence="1">Cytoplasm</location>
        <location evidence="1">Sarcoplasm</location>
    </subcellularLocation>
</comment>
<comment type="mass spectrometry"/>
<comment type="similarity">
    <text evidence="5">Belongs to the globin family.</text>
</comment>
<evidence type="ECO:0000250" key="1">
    <source>
        <dbReference type="UniProtKB" id="P02144"/>
    </source>
</evidence>
<evidence type="ECO:0000250" key="2">
    <source>
        <dbReference type="UniProtKB" id="P02185"/>
    </source>
</evidence>
<evidence type="ECO:0000250" key="3">
    <source>
        <dbReference type="UniProtKB" id="P02189"/>
    </source>
</evidence>
<evidence type="ECO:0000250" key="4">
    <source>
        <dbReference type="UniProtKB" id="P68082"/>
    </source>
</evidence>
<evidence type="ECO:0000255" key="5">
    <source>
        <dbReference type="PROSITE-ProRule" id="PRU00238"/>
    </source>
</evidence>
<evidence type="ECO:0000269" key="6">
    <source ref="1"/>
</evidence>
<evidence type="ECO:0000305" key="7"/>
<feature type="initiator methionine" description="Removed" evidence="6">
    <location>
        <position position="1"/>
    </location>
</feature>
<feature type="chain" id="PRO_0000274535" description="Myoglobin">
    <location>
        <begin position="2"/>
        <end position="154"/>
    </location>
</feature>
<feature type="domain" description="Globin" evidence="5">
    <location>
        <begin position="2"/>
        <end position="148"/>
    </location>
</feature>
<feature type="binding site" evidence="4">
    <location>
        <position position="65"/>
    </location>
    <ligand>
        <name>nitrite</name>
        <dbReference type="ChEBI" id="CHEBI:16301"/>
    </ligand>
</feature>
<feature type="binding site" evidence="3 5">
    <location>
        <position position="65"/>
    </location>
    <ligand>
        <name>O2</name>
        <dbReference type="ChEBI" id="CHEBI:15379"/>
    </ligand>
</feature>
<feature type="binding site" description="proximal binding residue" evidence="1">
    <location>
        <position position="94"/>
    </location>
    <ligand>
        <name>heme b</name>
        <dbReference type="ChEBI" id="CHEBI:60344"/>
    </ligand>
    <ligandPart>
        <name>Fe</name>
        <dbReference type="ChEBI" id="CHEBI:18248"/>
    </ligandPart>
</feature>